<accession>P23171</accession>
<feature type="chain" id="PRO_0000141652" description="Uncharacterized glutaredoxin-like 8.6 kDa protein in rubredoxin operon">
    <location>
        <begin position="1"/>
        <end position="75"/>
    </location>
</feature>
<feature type="domain" description="Glutaredoxin" evidence="1">
    <location>
        <begin position="1"/>
        <end position="75"/>
    </location>
</feature>
<feature type="disulfide bond" description="Redox-active" evidence="2">
    <location>
        <begin position="10"/>
        <end position="13"/>
    </location>
</feature>
<sequence length="75" mass="8607">MIKIYSTPTCPWCKKTKEYLKSKNIDFVDVNVADDMKEREEMRSLSKQSGVPVINIDGNIIVGFNKAEIDKLIEK</sequence>
<name>YRUB_CLOPA</name>
<comment type="similarity">
    <text evidence="3">Belongs to the glutaredoxin family.</text>
</comment>
<proteinExistence type="inferred from homology"/>
<protein>
    <recommendedName>
        <fullName>Uncharacterized glutaredoxin-like 8.6 kDa protein in rubredoxin operon</fullName>
    </recommendedName>
    <alternativeName>
        <fullName>ORF B</fullName>
    </alternativeName>
</protein>
<keyword id="KW-1015">Disulfide bond</keyword>
<keyword id="KW-0249">Electron transport</keyword>
<keyword id="KW-0676">Redox-active center</keyword>
<keyword id="KW-0813">Transport</keyword>
<reference key="1">
    <citation type="journal article" date="1992" name="Biochem. J.">
        <title>Cloning, sequencing and expression in Escherichia coli of the rubredoxin gene from Clostridium pasteurianum.</title>
        <authorList>
            <person name="Mathieu I."/>
            <person name="Meyer J."/>
            <person name="Moulis J.-M."/>
        </authorList>
    </citation>
    <scope>NUCLEOTIDE SEQUENCE [GENOMIC DNA]</scope>
</reference>
<evidence type="ECO:0000255" key="1">
    <source>
        <dbReference type="PROSITE-ProRule" id="PRU00686"/>
    </source>
</evidence>
<evidence type="ECO:0000255" key="2">
    <source>
        <dbReference type="PROSITE-ProRule" id="PRU01282"/>
    </source>
</evidence>
<evidence type="ECO:0000305" key="3"/>
<organism>
    <name type="scientific">Clostridium pasteurianum</name>
    <dbReference type="NCBI Taxonomy" id="1501"/>
    <lineage>
        <taxon>Bacteria</taxon>
        <taxon>Bacillati</taxon>
        <taxon>Bacillota</taxon>
        <taxon>Clostridia</taxon>
        <taxon>Eubacteriales</taxon>
        <taxon>Clostridiaceae</taxon>
        <taxon>Clostridium</taxon>
    </lineage>
</organism>
<dbReference type="EMBL" id="M60116">
    <property type="protein sequence ID" value="AAA23277.1"/>
    <property type="molecule type" value="Genomic_DNA"/>
</dbReference>
<dbReference type="PIR" id="S29118">
    <property type="entry name" value="S29118"/>
</dbReference>
<dbReference type="RefSeq" id="WP_003447688.1">
    <property type="nucleotide sequence ID" value="NZ_LFYL01000002.1"/>
</dbReference>
<dbReference type="SMR" id="P23171"/>
<dbReference type="GeneID" id="93075895"/>
<dbReference type="OrthoDB" id="9795531at2"/>
<dbReference type="GO" id="GO:0009055">
    <property type="term" value="F:electron transfer activity"/>
    <property type="evidence" value="ECO:0007669"/>
    <property type="project" value="TreeGrafter"/>
</dbReference>
<dbReference type="GO" id="GO:0045454">
    <property type="term" value="P:cell redox homeostasis"/>
    <property type="evidence" value="ECO:0007669"/>
    <property type="project" value="TreeGrafter"/>
</dbReference>
<dbReference type="CDD" id="cd02976">
    <property type="entry name" value="NrdH"/>
    <property type="match status" value="1"/>
</dbReference>
<dbReference type="Gene3D" id="3.40.30.10">
    <property type="entry name" value="Glutaredoxin"/>
    <property type="match status" value="1"/>
</dbReference>
<dbReference type="InterPro" id="IPR006660">
    <property type="entry name" value="Arsenate_reductase-like"/>
</dbReference>
<dbReference type="InterPro" id="IPR011767">
    <property type="entry name" value="GLR_AS"/>
</dbReference>
<dbReference type="InterPro" id="IPR011911">
    <property type="entry name" value="GlrX_YruB"/>
</dbReference>
<dbReference type="InterPro" id="IPR002109">
    <property type="entry name" value="Glutaredoxin"/>
</dbReference>
<dbReference type="InterPro" id="IPR051548">
    <property type="entry name" value="Grx-like_ET"/>
</dbReference>
<dbReference type="InterPro" id="IPR036249">
    <property type="entry name" value="Thioredoxin-like_sf"/>
</dbReference>
<dbReference type="NCBIfam" id="TIGR02196">
    <property type="entry name" value="GlrX_YruB"/>
    <property type="match status" value="1"/>
</dbReference>
<dbReference type="PANTHER" id="PTHR34386">
    <property type="entry name" value="GLUTAREDOXIN"/>
    <property type="match status" value="1"/>
</dbReference>
<dbReference type="PANTHER" id="PTHR34386:SF1">
    <property type="entry name" value="GLUTAREDOXIN-LIKE PROTEIN NRDH"/>
    <property type="match status" value="1"/>
</dbReference>
<dbReference type="Pfam" id="PF00462">
    <property type="entry name" value="Glutaredoxin"/>
    <property type="match status" value="1"/>
</dbReference>
<dbReference type="SUPFAM" id="SSF52833">
    <property type="entry name" value="Thioredoxin-like"/>
    <property type="match status" value="1"/>
</dbReference>
<dbReference type="PROSITE" id="PS00195">
    <property type="entry name" value="GLUTAREDOXIN_1"/>
    <property type="match status" value="1"/>
</dbReference>
<dbReference type="PROSITE" id="PS51354">
    <property type="entry name" value="GLUTAREDOXIN_2"/>
    <property type="match status" value="1"/>
</dbReference>